<proteinExistence type="inferred from homology"/>
<gene>
    <name evidence="1" type="primary">eno</name>
    <name type="ordered locus">BDU_336</name>
</gene>
<reference key="1">
    <citation type="journal article" date="2008" name="PLoS Genet.">
        <title>The genome of Borrelia recurrentis, the agent of deadly louse-borne relapsing fever, is a degraded subset of tick-borne Borrelia duttonii.</title>
        <authorList>
            <person name="Lescot M."/>
            <person name="Audic S."/>
            <person name="Robert C."/>
            <person name="Nguyen T.T."/>
            <person name="Blanc G."/>
            <person name="Cutler S.J."/>
            <person name="Wincker P."/>
            <person name="Couloux A."/>
            <person name="Claverie J.-M."/>
            <person name="Raoult D."/>
            <person name="Drancourt M."/>
        </authorList>
    </citation>
    <scope>NUCLEOTIDE SEQUENCE [LARGE SCALE GENOMIC DNA]</scope>
    <source>
        <strain>Ly</strain>
    </source>
</reference>
<sequence>MGFHIYEIKARQIIDSRGNPTVEADVILEDGTLGRAAVPSGASTGTNEAVELRDGDKSVYMGKGVLKAVENIINIISPELEGMSALNQVEIDRKMLELDGTPNKSKLGANAILAVSMATARAAAEHLGLKVYQYLGTYKANILPTPMCNIINGGAHSDNSVDFQEFMIMPIGAKTFSDAIRMSAEVFHTLKSILSKKGYATSVGDEGGFAPNLKSNEEACEVIMEAIKSAGYTPGTDIAIALDPATSELYDPKTKKYVFKWSTKEELTSQEMVEYWAKWVEKYPIISIEDGMAEEDWDGWKKLTDKIGNKIQLVGDDLFVTNTSFLKKGIEMKVANAILIKVNQIGTLTETFEAVEMAKKAGYTAIVSHRSGETEDTTIADLVVALGTGQIKTGSLSRTDRIAKYNQLLRIEEELGSIAEYHGKDVFYSINK</sequence>
<dbReference type="EC" id="4.2.1.11" evidence="1"/>
<dbReference type="EMBL" id="CP000976">
    <property type="protein sequence ID" value="ACH93288.1"/>
    <property type="molecule type" value="Genomic_DNA"/>
</dbReference>
<dbReference type="RefSeq" id="WP_012538099.1">
    <property type="nucleotide sequence ID" value="NC_011229.1"/>
</dbReference>
<dbReference type="SMR" id="B5RLS2"/>
<dbReference type="STRING" id="412419.BDU_336"/>
<dbReference type="KEGG" id="bdu:BDU_336"/>
<dbReference type="eggNOG" id="COG0148">
    <property type="taxonomic scope" value="Bacteria"/>
</dbReference>
<dbReference type="HOGENOM" id="CLU_031223_2_1_12"/>
<dbReference type="OrthoDB" id="9804716at2"/>
<dbReference type="UniPathway" id="UPA00109">
    <property type="reaction ID" value="UER00187"/>
</dbReference>
<dbReference type="Proteomes" id="UP000000611">
    <property type="component" value="Chromosome"/>
</dbReference>
<dbReference type="GO" id="GO:0009986">
    <property type="term" value="C:cell surface"/>
    <property type="evidence" value="ECO:0007669"/>
    <property type="project" value="UniProtKB-SubCell"/>
</dbReference>
<dbReference type="GO" id="GO:0005576">
    <property type="term" value="C:extracellular region"/>
    <property type="evidence" value="ECO:0007669"/>
    <property type="project" value="UniProtKB-SubCell"/>
</dbReference>
<dbReference type="GO" id="GO:0000015">
    <property type="term" value="C:phosphopyruvate hydratase complex"/>
    <property type="evidence" value="ECO:0007669"/>
    <property type="project" value="InterPro"/>
</dbReference>
<dbReference type="GO" id="GO:0000287">
    <property type="term" value="F:magnesium ion binding"/>
    <property type="evidence" value="ECO:0007669"/>
    <property type="project" value="UniProtKB-UniRule"/>
</dbReference>
<dbReference type="GO" id="GO:0004634">
    <property type="term" value="F:phosphopyruvate hydratase activity"/>
    <property type="evidence" value="ECO:0007669"/>
    <property type="project" value="UniProtKB-UniRule"/>
</dbReference>
<dbReference type="GO" id="GO:0006096">
    <property type="term" value="P:glycolytic process"/>
    <property type="evidence" value="ECO:0007669"/>
    <property type="project" value="UniProtKB-UniRule"/>
</dbReference>
<dbReference type="CDD" id="cd03313">
    <property type="entry name" value="enolase"/>
    <property type="match status" value="1"/>
</dbReference>
<dbReference type="FunFam" id="3.20.20.120:FF:000001">
    <property type="entry name" value="Enolase"/>
    <property type="match status" value="1"/>
</dbReference>
<dbReference type="FunFam" id="3.30.390.10:FF:000001">
    <property type="entry name" value="Enolase"/>
    <property type="match status" value="1"/>
</dbReference>
<dbReference type="Gene3D" id="3.20.20.120">
    <property type="entry name" value="Enolase-like C-terminal domain"/>
    <property type="match status" value="1"/>
</dbReference>
<dbReference type="Gene3D" id="3.30.390.10">
    <property type="entry name" value="Enolase-like, N-terminal domain"/>
    <property type="match status" value="1"/>
</dbReference>
<dbReference type="HAMAP" id="MF_00318">
    <property type="entry name" value="Enolase"/>
    <property type="match status" value="1"/>
</dbReference>
<dbReference type="InterPro" id="IPR000941">
    <property type="entry name" value="Enolase"/>
</dbReference>
<dbReference type="InterPro" id="IPR036849">
    <property type="entry name" value="Enolase-like_C_sf"/>
</dbReference>
<dbReference type="InterPro" id="IPR029017">
    <property type="entry name" value="Enolase-like_N"/>
</dbReference>
<dbReference type="InterPro" id="IPR020810">
    <property type="entry name" value="Enolase_C"/>
</dbReference>
<dbReference type="InterPro" id="IPR020809">
    <property type="entry name" value="Enolase_CS"/>
</dbReference>
<dbReference type="InterPro" id="IPR020811">
    <property type="entry name" value="Enolase_N"/>
</dbReference>
<dbReference type="NCBIfam" id="TIGR01060">
    <property type="entry name" value="eno"/>
    <property type="match status" value="1"/>
</dbReference>
<dbReference type="PANTHER" id="PTHR11902">
    <property type="entry name" value="ENOLASE"/>
    <property type="match status" value="1"/>
</dbReference>
<dbReference type="PANTHER" id="PTHR11902:SF1">
    <property type="entry name" value="ENOLASE"/>
    <property type="match status" value="1"/>
</dbReference>
<dbReference type="Pfam" id="PF00113">
    <property type="entry name" value="Enolase_C"/>
    <property type="match status" value="1"/>
</dbReference>
<dbReference type="Pfam" id="PF03952">
    <property type="entry name" value="Enolase_N"/>
    <property type="match status" value="1"/>
</dbReference>
<dbReference type="PIRSF" id="PIRSF001400">
    <property type="entry name" value="Enolase"/>
    <property type="match status" value="1"/>
</dbReference>
<dbReference type="PRINTS" id="PR00148">
    <property type="entry name" value="ENOLASE"/>
</dbReference>
<dbReference type="SFLD" id="SFLDF00002">
    <property type="entry name" value="enolase"/>
    <property type="match status" value="1"/>
</dbReference>
<dbReference type="SFLD" id="SFLDG00178">
    <property type="entry name" value="enolase"/>
    <property type="match status" value="1"/>
</dbReference>
<dbReference type="SMART" id="SM01192">
    <property type="entry name" value="Enolase_C"/>
    <property type="match status" value="1"/>
</dbReference>
<dbReference type="SMART" id="SM01193">
    <property type="entry name" value="Enolase_N"/>
    <property type="match status" value="1"/>
</dbReference>
<dbReference type="SUPFAM" id="SSF51604">
    <property type="entry name" value="Enolase C-terminal domain-like"/>
    <property type="match status" value="1"/>
</dbReference>
<dbReference type="SUPFAM" id="SSF54826">
    <property type="entry name" value="Enolase N-terminal domain-like"/>
    <property type="match status" value="1"/>
</dbReference>
<dbReference type="PROSITE" id="PS00164">
    <property type="entry name" value="ENOLASE"/>
    <property type="match status" value="1"/>
</dbReference>
<evidence type="ECO:0000255" key="1">
    <source>
        <dbReference type="HAMAP-Rule" id="MF_00318"/>
    </source>
</evidence>
<organism>
    <name type="scientific">Borrelia duttonii (strain Ly)</name>
    <dbReference type="NCBI Taxonomy" id="412419"/>
    <lineage>
        <taxon>Bacteria</taxon>
        <taxon>Pseudomonadati</taxon>
        <taxon>Spirochaetota</taxon>
        <taxon>Spirochaetia</taxon>
        <taxon>Spirochaetales</taxon>
        <taxon>Borreliaceae</taxon>
        <taxon>Borrelia</taxon>
    </lineage>
</organism>
<name>ENO_BORDL</name>
<feature type="chain" id="PRO_1000115831" description="Enolase">
    <location>
        <begin position="1"/>
        <end position="432"/>
    </location>
</feature>
<feature type="active site" description="Proton donor" evidence="1">
    <location>
        <position position="206"/>
    </location>
</feature>
<feature type="active site" description="Proton acceptor" evidence="1">
    <location>
        <position position="341"/>
    </location>
</feature>
<feature type="binding site" evidence="1">
    <location>
        <position position="164"/>
    </location>
    <ligand>
        <name>(2R)-2-phosphoglycerate</name>
        <dbReference type="ChEBI" id="CHEBI:58289"/>
    </ligand>
</feature>
<feature type="binding site" evidence="1">
    <location>
        <position position="243"/>
    </location>
    <ligand>
        <name>Mg(2+)</name>
        <dbReference type="ChEBI" id="CHEBI:18420"/>
    </ligand>
</feature>
<feature type="binding site" evidence="1">
    <location>
        <position position="289"/>
    </location>
    <ligand>
        <name>Mg(2+)</name>
        <dbReference type="ChEBI" id="CHEBI:18420"/>
    </ligand>
</feature>
<feature type="binding site" evidence="1">
    <location>
        <position position="316"/>
    </location>
    <ligand>
        <name>Mg(2+)</name>
        <dbReference type="ChEBI" id="CHEBI:18420"/>
    </ligand>
</feature>
<feature type="binding site" evidence="1">
    <location>
        <position position="341"/>
    </location>
    <ligand>
        <name>(2R)-2-phosphoglycerate</name>
        <dbReference type="ChEBI" id="CHEBI:58289"/>
    </ligand>
</feature>
<feature type="binding site" evidence="1">
    <location>
        <position position="370"/>
    </location>
    <ligand>
        <name>(2R)-2-phosphoglycerate</name>
        <dbReference type="ChEBI" id="CHEBI:58289"/>
    </ligand>
</feature>
<feature type="binding site" evidence="1">
    <location>
        <position position="371"/>
    </location>
    <ligand>
        <name>(2R)-2-phosphoglycerate</name>
        <dbReference type="ChEBI" id="CHEBI:58289"/>
    </ligand>
</feature>
<feature type="binding site" evidence="1">
    <location>
        <position position="392"/>
    </location>
    <ligand>
        <name>(2R)-2-phosphoglycerate</name>
        <dbReference type="ChEBI" id="CHEBI:58289"/>
    </ligand>
</feature>
<protein>
    <recommendedName>
        <fullName evidence="1">Enolase</fullName>
        <ecNumber evidence="1">4.2.1.11</ecNumber>
    </recommendedName>
    <alternativeName>
        <fullName evidence="1">2-phospho-D-glycerate hydro-lyase</fullName>
    </alternativeName>
    <alternativeName>
        <fullName evidence="1">2-phosphoglycerate dehydratase</fullName>
    </alternativeName>
</protein>
<accession>B5RLS2</accession>
<keyword id="KW-0963">Cytoplasm</keyword>
<keyword id="KW-0324">Glycolysis</keyword>
<keyword id="KW-0456">Lyase</keyword>
<keyword id="KW-0460">Magnesium</keyword>
<keyword id="KW-0479">Metal-binding</keyword>
<keyword id="KW-0964">Secreted</keyword>
<comment type="function">
    <text evidence="1">Catalyzes the reversible conversion of 2-phosphoglycerate (2-PG) into phosphoenolpyruvate (PEP). It is essential for the degradation of carbohydrates via glycolysis.</text>
</comment>
<comment type="catalytic activity">
    <reaction evidence="1">
        <text>(2R)-2-phosphoglycerate = phosphoenolpyruvate + H2O</text>
        <dbReference type="Rhea" id="RHEA:10164"/>
        <dbReference type="ChEBI" id="CHEBI:15377"/>
        <dbReference type="ChEBI" id="CHEBI:58289"/>
        <dbReference type="ChEBI" id="CHEBI:58702"/>
        <dbReference type="EC" id="4.2.1.11"/>
    </reaction>
</comment>
<comment type="cofactor">
    <cofactor evidence="1">
        <name>Mg(2+)</name>
        <dbReference type="ChEBI" id="CHEBI:18420"/>
    </cofactor>
    <text evidence="1">Binds a second Mg(2+) ion via substrate during catalysis.</text>
</comment>
<comment type="pathway">
    <text evidence="1">Carbohydrate degradation; glycolysis; pyruvate from D-glyceraldehyde 3-phosphate: step 4/5.</text>
</comment>
<comment type="subcellular location">
    <subcellularLocation>
        <location evidence="1">Cytoplasm</location>
    </subcellularLocation>
    <subcellularLocation>
        <location evidence="1">Secreted</location>
    </subcellularLocation>
    <subcellularLocation>
        <location evidence="1">Cell surface</location>
    </subcellularLocation>
    <text evidence="1">Fractions of enolase are present in both the cytoplasm and on the cell surface.</text>
</comment>
<comment type="similarity">
    <text evidence="1">Belongs to the enolase family.</text>
</comment>